<evidence type="ECO:0000255" key="1">
    <source>
        <dbReference type="HAMAP-Rule" id="MF_00212"/>
    </source>
</evidence>
<feature type="chain" id="PRO_1000078030" description="Probable malate:quinone oxidoreductase">
    <location>
        <begin position="1"/>
        <end position="500"/>
    </location>
</feature>
<reference key="1">
    <citation type="journal article" date="2008" name="Chem. Biol. Interact.">
        <title>Extending the Bacillus cereus group genomics to putative food-borne pathogens of different toxicity.</title>
        <authorList>
            <person name="Lapidus A."/>
            <person name="Goltsman E."/>
            <person name="Auger S."/>
            <person name="Galleron N."/>
            <person name="Segurens B."/>
            <person name="Dossat C."/>
            <person name="Land M.L."/>
            <person name="Broussolle V."/>
            <person name="Brillard J."/>
            <person name="Guinebretiere M.-H."/>
            <person name="Sanchis V."/>
            <person name="Nguen-the C."/>
            <person name="Lereclus D."/>
            <person name="Richardson P."/>
            <person name="Wincker P."/>
            <person name="Weissenbach J."/>
            <person name="Ehrlich S.D."/>
            <person name="Sorokin A."/>
        </authorList>
    </citation>
    <scope>NUCLEOTIDE SEQUENCE [LARGE SCALE GENOMIC DNA]</scope>
    <source>
        <strain>DSM 22905 / CIP 110041 / 391-98 / NVH 391-98</strain>
    </source>
</reference>
<accession>A7GQI9</accession>
<comment type="catalytic activity">
    <reaction evidence="1">
        <text>(S)-malate + a quinone = a quinol + oxaloacetate</text>
        <dbReference type="Rhea" id="RHEA:46012"/>
        <dbReference type="ChEBI" id="CHEBI:15589"/>
        <dbReference type="ChEBI" id="CHEBI:16452"/>
        <dbReference type="ChEBI" id="CHEBI:24646"/>
        <dbReference type="ChEBI" id="CHEBI:132124"/>
        <dbReference type="EC" id="1.1.5.4"/>
    </reaction>
</comment>
<comment type="cofactor">
    <cofactor evidence="1">
        <name>FAD</name>
        <dbReference type="ChEBI" id="CHEBI:57692"/>
    </cofactor>
</comment>
<comment type="pathway">
    <text evidence="1">Carbohydrate metabolism; tricarboxylic acid cycle; oxaloacetate from (S)-malate (quinone route): step 1/1.</text>
</comment>
<comment type="similarity">
    <text evidence="1">Belongs to the MQO family.</text>
</comment>
<gene>
    <name evidence="1" type="primary">mqo</name>
    <name type="ordered locus">Bcer98_2135</name>
</gene>
<organism>
    <name type="scientific">Bacillus cytotoxicus (strain DSM 22905 / CIP 110041 / 391-98 / NVH 391-98)</name>
    <dbReference type="NCBI Taxonomy" id="315749"/>
    <lineage>
        <taxon>Bacteria</taxon>
        <taxon>Bacillati</taxon>
        <taxon>Bacillota</taxon>
        <taxon>Bacilli</taxon>
        <taxon>Bacillales</taxon>
        <taxon>Bacillaceae</taxon>
        <taxon>Bacillus</taxon>
        <taxon>Bacillus cereus group</taxon>
    </lineage>
</organism>
<name>MQO_BACCN</name>
<protein>
    <recommendedName>
        <fullName evidence="1">Probable malate:quinone oxidoreductase</fullName>
        <ecNumber evidence="1">1.1.5.4</ecNumber>
    </recommendedName>
    <alternativeName>
        <fullName evidence="1">MQO</fullName>
    </alternativeName>
    <alternativeName>
        <fullName evidence="1">Malate dehydrogenase [quinone]</fullName>
    </alternativeName>
</protein>
<keyword id="KW-0274">FAD</keyword>
<keyword id="KW-0285">Flavoprotein</keyword>
<keyword id="KW-0560">Oxidoreductase</keyword>
<keyword id="KW-0816">Tricarboxylic acid cycle</keyword>
<proteinExistence type="inferred from homology"/>
<sequence>MSNMQKKTDVILIGAGIMSATLGSLLKELAPEWEIKMFEKLEGAGEESSNEWNNAGTGHSALCELNYTSEKPDGSIDIKKALKINEQFQLSRQFWSYLVNSNLIRNPQKFIMPIPHMSLVQGEKNVTFLKKRFKALSNIPLFQGMEFSDDPEKLKEWMPLIMEGRTSNEPIAATKMESGTDVNFGALTRMLFEHLQNKNVELNYKHSVENIKRMKNGLWEVKVHDMNNGKIEYHTAKFVFIGAGGGSLPLLQKTGIPESKHIGGFPVSGLFMVCNNPKVIEKHHAKVYGKAKVGAPPMSVPHLDTRYIDNKKTLLFGPFAGFSPKFLKTGSNLDLLGSVKPNNVLTMLAAGVKEMALTKYLIQQVMLSNEKRIEELREFIPNAKGEDWDVVVAGQRVQVIKDTETGGKGTLQFGTEVVSAADGSIAALLGASPGASTAVNVMLEVLEKCFPQYMEKWEEKIKHMIPSYGISLVENPKLFQEIHTSTSKTLGLSKKEAVYS</sequence>
<dbReference type="EC" id="1.1.5.4" evidence="1"/>
<dbReference type="EMBL" id="CP000764">
    <property type="protein sequence ID" value="ABS22397.1"/>
    <property type="molecule type" value="Genomic_DNA"/>
</dbReference>
<dbReference type="RefSeq" id="WP_012094591.1">
    <property type="nucleotide sequence ID" value="NC_009674.1"/>
</dbReference>
<dbReference type="SMR" id="A7GQI9"/>
<dbReference type="STRING" id="315749.Bcer98_2135"/>
<dbReference type="GeneID" id="33897422"/>
<dbReference type="KEGG" id="bcy:Bcer98_2135"/>
<dbReference type="eggNOG" id="COG0579">
    <property type="taxonomic scope" value="Bacteria"/>
</dbReference>
<dbReference type="HOGENOM" id="CLU_028151_0_0_9"/>
<dbReference type="OrthoDB" id="9763983at2"/>
<dbReference type="UniPathway" id="UPA00223">
    <property type="reaction ID" value="UER01008"/>
</dbReference>
<dbReference type="Proteomes" id="UP000002300">
    <property type="component" value="Chromosome"/>
</dbReference>
<dbReference type="GO" id="GO:0047545">
    <property type="term" value="F:2-hydroxyglutarate dehydrogenase activity"/>
    <property type="evidence" value="ECO:0007669"/>
    <property type="project" value="TreeGrafter"/>
</dbReference>
<dbReference type="GO" id="GO:0008924">
    <property type="term" value="F:L-malate dehydrogenase (quinone) activity"/>
    <property type="evidence" value="ECO:0007669"/>
    <property type="project" value="UniProtKB-UniRule"/>
</dbReference>
<dbReference type="GO" id="GO:0006099">
    <property type="term" value="P:tricarboxylic acid cycle"/>
    <property type="evidence" value="ECO:0007669"/>
    <property type="project" value="UniProtKB-UniRule"/>
</dbReference>
<dbReference type="HAMAP" id="MF_00212">
    <property type="entry name" value="MQO"/>
    <property type="match status" value="1"/>
</dbReference>
<dbReference type="InterPro" id="IPR036188">
    <property type="entry name" value="FAD/NAD-bd_sf"/>
</dbReference>
<dbReference type="InterPro" id="IPR006231">
    <property type="entry name" value="MQO"/>
</dbReference>
<dbReference type="NCBIfam" id="TIGR01320">
    <property type="entry name" value="mal_quin_oxido"/>
    <property type="match status" value="1"/>
</dbReference>
<dbReference type="NCBIfam" id="NF003603">
    <property type="entry name" value="PRK05257.1-1"/>
    <property type="match status" value="1"/>
</dbReference>
<dbReference type="NCBIfam" id="NF003604">
    <property type="entry name" value="PRK05257.1-3"/>
    <property type="match status" value="1"/>
</dbReference>
<dbReference type="NCBIfam" id="NF003605">
    <property type="entry name" value="PRK05257.1-4"/>
    <property type="match status" value="1"/>
</dbReference>
<dbReference type="NCBIfam" id="NF003606">
    <property type="entry name" value="PRK05257.2-1"/>
    <property type="match status" value="1"/>
</dbReference>
<dbReference type="NCBIfam" id="NF003608">
    <property type="entry name" value="PRK05257.2-4"/>
    <property type="match status" value="1"/>
</dbReference>
<dbReference type="NCBIfam" id="NF003610">
    <property type="entry name" value="PRK05257.3-1"/>
    <property type="match status" value="1"/>
</dbReference>
<dbReference type="NCBIfam" id="NF003611">
    <property type="entry name" value="PRK05257.3-2"/>
    <property type="match status" value="1"/>
</dbReference>
<dbReference type="NCBIfam" id="NF009875">
    <property type="entry name" value="PRK13339.1"/>
    <property type="match status" value="1"/>
</dbReference>
<dbReference type="PANTHER" id="PTHR43104">
    <property type="entry name" value="L-2-HYDROXYGLUTARATE DEHYDROGENASE, MITOCHONDRIAL"/>
    <property type="match status" value="1"/>
</dbReference>
<dbReference type="PANTHER" id="PTHR43104:SF2">
    <property type="entry name" value="L-2-HYDROXYGLUTARATE DEHYDROGENASE, MITOCHONDRIAL"/>
    <property type="match status" value="1"/>
</dbReference>
<dbReference type="Pfam" id="PF06039">
    <property type="entry name" value="Mqo"/>
    <property type="match status" value="1"/>
</dbReference>
<dbReference type="SUPFAM" id="SSF51905">
    <property type="entry name" value="FAD/NAD(P)-binding domain"/>
    <property type="match status" value="1"/>
</dbReference>